<comment type="function">
    <text evidence="1">May be involved in intracellular vesicle transport.</text>
</comment>
<comment type="subcellular location">
    <subcellularLocation>
        <location evidence="4">Membrane</location>
        <topology evidence="4">Multi-pass membrane protein</topology>
    </subcellularLocation>
</comment>
<comment type="similarity">
    <text evidence="4">Belongs to the BRE4 family.</text>
</comment>
<keyword id="KW-0325">Glycoprotein</keyword>
<keyword id="KW-0472">Membrane</keyword>
<keyword id="KW-0653">Protein transport</keyword>
<keyword id="KW-1185">Reference proteome</keyword>
<keyword id="KW-0812">Transmembrane</keyword>
<keyword id="KW-1133">Transmembrane helix</keyword>
<keyword id="KW-0813">Transport</keyword>
<reference key="1">
    <citation type="journal article" date="2004" name="Science">
        <title>The Ashbya gossypii genome as a tool for mapping the ancient Saccharomyces cerevisiae genome.</title>
        <authorList>
            <person name="Dietrich F.S."/>
            <person name="Voegeli S."/>
            <person name="Brachat S."/>
            <person name="Lerch A."/>
            <person name="Gates K."/>
            <person name="Steiner S."/>
            <person name="Mohr C."/>
            <person name="Poehlmann R."/>
            <person name="Luedi P."/>
            <person name="Choi S."/>
            <person name="Wing R.A."/>
            <person name="Flavier A."/>
            <person name="Gaffney T.D."/>
            <person name="Philippsen P."/>
        </authorList>
    </citation>
    <scope>NUCLEOTIDE SEQUENCE [LARGE SCALE GENOMIC DNA]</scope>
    <source>
        <strain>ATCC 10895 / CBS 109.51 / FGSC 9923 / NRRL Y-1056</strain>
    </source>
</reference>
<reference key="2">
    <citation type="journal article" date="2013" name="G3 (Bethesda)">
        <title>Genomes of Ashbya fungi isolated from insects reveal four mating-type loci, numerous translocations, lack of transposons, and distinct gene duplications.</title>
        <authorList>
            <person name="Dietrich F.S."/>
            <person name="Voegeli S."/>
            <person name="Kuo S."/>
            <person name="Philippsen P."/>
        </authorList>
    </citation>
    <scope>GENOME REANNOTATION</scope>
    <scope>SEQUENCE REVISION TO 204 AND 257-258</scope>
    <source>
        <strain>ATCC 10895 / CBS 109.51 / FGSC 9923 / NRRL Y-1056</strain>
    </source>
</reference>
<accession>Q75E41</accession>
<protein>
    <recommendedName>
        <fullName>Protein BRE4</fullName>
    </recommendedName>
</protein>
<sequence>MEVLKGSYKQKSFQSLKDLGQQGSSAAPGVRPTKSLQTSPIGSWTSLSHLRLEKLAEGSGWEELQDYGLEELRDGFFDASYSRPQRVAATEPPVSTSPKAQSPLAVRCKAFRDRLRVHWKAVVKFTVAYLAAMFLCLVRPASDWIGDVYSCFLPVAVLIHHPVRTVGVQLEITVQSIVGLALGQGWSALWWYVCSVARVGRHEGALLFLSLVLSGLWSSWLAAAYGRLVYMSVSFGITATFFATSMPPSEGSLPIWRHFWDQGMSYLFGLLLSLLVCIFLFPRFGHATIGRGFSSAANDLKHLLDYLVDARYCNDIPMLVEAQENAVSAIDVRLSEGYREFANQFSITRFDGKLLEQLRNSLTIAASPLRSLPLGHGLLTNVELERFHQARPQSAPENTICVRDADDHYEDQAIKTEESANLGLACGSTDLCSAIIRDKFSETIFDLIMELIHALNSLQVGLNNISESNVSASERADIKANILACLSNLHDRIRRLDIKYKEFGRAGLFTSELLLNPKSSDALVFLRYIRQCAKHMTKVLEVFLQLNASVHWRVIPPKYQWHRAIHRLSHQCALDQGASFLWNYFQTKRDVDDAFEMIYNSYTSKHHEVSDLFSRQGMRPRIRAFDHKDFAVHSTSNPIRYKLWQLNNSLLGPESRWARKFTVVLVALCLPGWLPGSKVWYREYHCLWAPIIYVILSNRRNSSNWRALYKRLAGCVLGVFWAWCANQAKHYSNPFIIATFSVLLCIPLAFNYFAYNRRKSTLAALICFTVPALVTFFLEEHTTASLWKQAWTTGVALLIGTFCSIPINWFIWTFTARSELSLAVSGLLMHLSQSYQIVAGRYLYRDTDDHPNDLTRSLASIREVRLSQSLLATRALVRSAVSEPNIVSEFRAYLFDELLDHFSVLLERLIEARRLGQHFQVWDRDPNTETTRALLSLRRDNVASVIFIFYMLSNCFSSGSKVPKYLPNPIFVRKKLFDTFMKLAEDASARGTSAHSSTPAAPNNTDPSSPSSAGQDHWDEVYAICFSRAFTDISVELQRIIDLAKEILGQEGD</sequence>
<dbReference type="EMBL" id="AE016815">
    <property type="protein sequence ID" value="AAS50600.2"/>
    <property type="molecule type" value="Genomic_DNA"/>
</dbReference>
<dbReference type="RefSeq" id="NP_982776.2">
    <property type="nucleotide sequence ID" value="NM_208129.2"/>
</dbReference>
<dbReference type="SMR" id="Q75E41"/>
<dbReference type="FunCoup" id="Q75E41">
    <property type="interactions" value="18"/>
</dbReference>
<dbReference type="STRING" id="284811.Q75E41"/>
<dbReference type="GlyCosmos" id="Q75E41">
    <property type="glycosylation" value="6 sites, No reported glycans"/>
</dbReference>
<dbReference type="EnsemblFungi" id="AAS50600">
    <property type="protein sequence ID" value="AAS50600"/>
    <property type="gene ID" value="AGOS_ABL171W"/>
</dbReference>
<dbReference type="GeneID" id="4618856"/>
<dbReference type="KEGG" id="ago:AGOS_ABL171W"/>
<dbReference type="eggNOG" id="KOG4711">
    <property type="taxonomic scope" value="Eukaryota"/>
</dbReference>
<dbReference type="HOGENOM" id="CLU_004486_0_0_1"/>
<dbReference type="InParanoid" id="Q75E41"/>
<dbReference type="OMA" id="FWGWAAN"/>
<dbReference type="OrthoDB" id="1924968at2759"/>
<dbReference type="Proteomes" id="UP000000591">
    <property type="component" value="Chromosome II"/>
</dbReference>
<dbReference type="GO" id="GO:0016020">
    <property type="term" value="C:membrane"/>
    <property type="evidence" value="ECO:0007669"/>
    <property type="project" value="UniProtKB-SubCell"/>
</dbReference>
<dbReference type="GO" id="GO:0006897">
    <property type="term" value="P:endocytosis"/>
    <property type="evidence" value="ECO:0007669"/>
    <property type="project" value="EnsemblFungi"/>
</dbReference>
<dbReference type="GO" id="GO:0015031">
    <property type="term" value="P:protein transport"/>
    <property type="evidence" value="ECO:0007669"/>
    <property type="project" value="UniProtKB-KW"/>
</dbReference>
<dbReference type="InterPro" id="IPR023244">
    <property type="entry name" value="Brefeldin_A-sensitivity_4"/>
</dbReference>
<dbReference type="InterPro" id="IPR052430">
    <property type="entry name" value="IVT-Associated"/>
</dbReference>
<dbReference type="InterPro" id="IPR049453">
    <property type="entry name" value="Memb_transporter_dom"/>
</dbReference>
<dbReference type="PANTHER" id="PTHR47804">
    <property type="entry name" value="60S RIBOSOMAL PROTEIN L19"/>
    <property type="match status" value="1"/>
</dbReference>
<dbReference type="PANTHER" id="PTHR47804:SF3">
    <property type="entry name" value="PROTEIN BRE4"/>
    <property type="match status" value="1"/>
</dbReference>
<dbReference type="Pfam" id="PF13515">
    <property type="entry name" value="FUSC_2"/>
    <property type="match status" value="1"/>
</dbReference>
<dbReference type="PRINTS" id="PR02047">
    <property type="entry name" value="BREFELDNASP4"/>
</dbReference>
<evidence type="ECO:0000250" key="1"/>
<evidence type="ECO:0000255" key="2"/>
<evidence type="ECO:0000256" key="3">
    <source>
        <dbReference type="SAM" id="MobiDB-lite"/>
    </source>
</evidence>
<evidence type="ECO:0000305" key="4"/>
<proteinExistence type="inferred from homology"/>
<name>BRE4_EREGS</name>
<organism>
    <name type="scientific">Eremothecium gossypii (strain ATCC 10895 / CBS 109.51 / FGSC 9923 / NRRL Y-1056)</name>
    <name type="common">Yeast</name>
    <name type="synonym">Ashbya gossypii</name>
    <dbReference type="NCBI Taxonomy" id="284811"/>
    <lineage>
        <taxon>Eukaryota</taxon>
        <taxon>Fungi</taxon>
        <taxon>Dikarya</taxon>
        <taxon>Ascomycota</taxon>
        <taxon>Saccharomycotina</taxon>
        <taxon>Saccharomycetes</taxon>
        <taxon>Saccharomycetales</taxon>
        <taxon>Saccharomycetaceae</taxon>
        <taxon>Eremothecium</taxon>
    </lineage>
</organism>
<gene>
    <name type="primary">BRE4</name>
    <name type="ordered locus">ABL171W</name>
</gene>
<feature type="chain" id="PRO_0000239633" description="Protein BRE4">
    <location>
        <begin position="1"/>
        <end position="1053"/>
    </location>
</feature>
<feature type="transmembrane region" description="Helical" evidence="2">
    <location>
        <begin position="117"/>
        <end position="137"/>
    </location>
</feature>
<feature type="transmembrane region" description="Helical" evidence="2">
    <location>
        <begin position="143"/>
        <end position="163"/>
    </location>
</feature>
<feature type="transmembrane region" description="Helical" evidence="2">
    <location>
        <begin position="177"/>
        <end position="197"/>
    </location>
</feature>
<feature type="transmembrane region" description="Helical" evidence="2">
    <location>
        <begin position="205"/>
        <end position="225"/>
    </location>
</feature>
<feature type="transmembrane region" description="Helical" evidence="2">
    <location>
        <begin position="228"/>
        <end position="248"/>
    </location>
</feature>
<feature type="transmembrane region" description="Helical" evidence="2">
    <location>
        <begin position="262"/>
        <end position="282"/>
    </location>
</feature>
<feature type="transmembrane region" description="Helical" evidence="2">
    <location>
        <begin position="661"/>
        <end position="681"/>
    </location>
</feature>
<feature type="transmembrane region" description="Helical" evidence="2">
    <location>
        <begin position="735"/>
        <end position="755"/>
    </location>
</feature>
<feature type="transmembrane region" description="Helical" evidence="2">
    <location>
        <begin position="760"/>
        <end position="780"/>
    </location>
</feature>
<feature type="transmembrane region" description="Helical" evidence="2">
    <location>
        <begin position="794"/>
        <end position="814"/>
    </location>
</feature>
<feature type="region of interest" description="Disordered" evidence="3">
    <location>
        <begin position="1"/>
        <end position="38"/>
    </location>
</feature>
<feature type="region of interest" description="Disordered" evidence="3">
    <location>
        <begin position="991"/>
        <end position="1014"/>
    </location>
</feature>
<feature type="compositionally biased region" description="Polar residues" evidence="3">
    <location>
        <begin position="9"/>
        <end position="25"/>
    </location>
</feature>
<feature type="glycosylation site" description="N-linked (GlcNAc...) asparagine" evidence="2">
    <location>
        <position position="464"/>
    </location>
</feature>
<feature type="glycosylation site" description="N-linked (GlcNAc...) asparagine" evidence="2">
    <location>
        <position position="469"/>
    </location>
</feature>
<feature type="glycosylation site" description="N-linked (GlcNAc...) asparagine" evidence="2">
    <location>
        <position position="547"/>
    </location>
</feature>
<feature type="glycosylation site" description="N-linked (GlcNAc...) asparagine" evidence="2">
    <location>
        <position position="647"/>
    </location>
</feature>
<feature type="glycosylation site" description="N-linked (GlcNAc...) asparagine" evidence="2">
    <location>
        <position position="701"/>
    </location>
</feature>
<feature type="glycosylation site" description="N-linked (GlcNAc...) asparagine" evidence="2">
    <location>
        <position position="1003"/>
    </location>
</feature>